<proteinExistence type="inferred from homology"/>
<gene>
    <name evidence="1" type="primary">obg</name>
    <name type="ordered locus">Adeh_4180</name>
</gene>
<feature type="chain" id="PRO_0000385693" description="GTPase Obg">
    <location>
        <begin position="1"/>
        <end position="354"/>
    </location>
</feature>
<feature type="domain" description="Obg" evidence="2">
    <location>
        <begin position="1"/>
        <end position="159"/>
    </location>
</feature>
<feature type="domain" description="OBG-type G" evidence="1">
    <location>
        <begin position="160"/>
        <end position="333"/>
    </location>
</feature>
<feature type="binding site" evidence="1">
    <location>
        <begin position="166"/>
        <end position="173"/>
    </location>
    <ligand>
        <name>GTP</name>
        <dbReference type="ChEBI" id="CHEBI:37565"/>
    </ligand>
</feature>
<feature type="binding site" evidence="1">
    <location>
        <position position="173"/>
    </location>
    <ligand>
        <name>Mg(2+)</name>
        <dbReference type="ChEBI" id="CHEBI:18420"/>
    </ligand>
</feature>
<feature type="binding site" evidence="1">
    <location>
        <begin position="191"/>
        <end position="195"/>
    </location>
    <ligand>
        <name>GTP</name>
        <dbReference type="ChEBI" id="CHEBI:37565"/>
    </ligand>
</feature>
<feature type="binding site" evidence="1">
    <location>
        <position position="193"/>
    </location>
    <ligand>
        <name>Mg(2+)</name>
        <dbReference type="ChEBI" id="CHEBI:18420"/>
    </ligand>
</feature>
<feature type="binding site" evidence="1">
    <location>
        <begin position="212"/>
        <end position="215"/>
    </location>
    <ligand>
        <name>GTP</name>
        <dbReference type="ChEBI" id="CHEBI:37565"/>
    </ligand>
</feature>
<feature type="binding site" evidence="1">
    <location>
        <begin position="283"/>
        <end position="286"/>
    </location>
    <ligand>
        <name>GTP</name>
        <dbReference type="ChEBI" id="CHEBI:37565"/>
    </ligand>
</feature>
<feature type="binding site" evidence="1">
    <location>
        <begin position="314"/>
        <end position="316"/>
    </location>
    <ligand>
        <name>GTP</name>
        <dbReference type="ChEBI" id="CHEBI:37565"/>
    </ligand>
</feature>
<reference key="1">
    <citation type="submission" date="2006-01" db="EMBL/GenBank/DDBJ databases">
        <title>Complete sequence of Anaeromyxobacter dehalogenans 2CP-C.</title>
        <authorList>
            <person name="Copeland A."/>
            <person name="Lucas S."/>
            <person name="Lapidus A."/>
            <person name="Barry K."/>
            <person name="Detter J.C."/>
            <person name="Glavina T."/>
            <person name="Hammon N."/>
            <person name="Israni S."/>
            <person name="Pitluck S."/>
            <person name="Brettin T."/>
            <person name="Bruce D."/>
            <person name="Han C."/>
            <person name="Tapia R."/>
            <person name="Gilna P."/>
            <person name="Kiss H."/>
            <person name="Schmutz J."/>
            <person name="Larimer F."/>
            <person name="Land M."/>
            <person name="Kyrpides N."/>
            <person name="Anderson I."/>
            <person name="Sanford R.A."/>
            <person name="Ritalahti K.M."/>
            <person name="Thomas H.S."/>
            <person name="Kirby J.R."/>
            <person name="Zhulin I.B."/>
            <person name="Loeffler F.E."/>
            <person name="Richardson P."/>
        </authorList>
    </citation>
    <scope>NUCLEOTIDE SEQUENCE [LARGE SCALE GENOMIC DNA]</scope>
    <source>
        <strain>2CP-C</strain>
    </source>
</reference>
<evidence type="ECO:0000255" key="1">
    <source>
        <dbReference type="HAMAP-Rule" id="MF_01454"/>
    </source>
</evidence>
<evidence type="ECO:0000255" key="2">
    <source>
        <dbReference type="PROSITE-ProRule" id="PRU01231"/>
    </source>
</evidence>
<comment type="function">
    <text evidence="1">An essential GTPase which binds GTP, GDP and possibly (p)ppGpp with moderate affinity, with high nucleotide exchange rates and a fairly low GTP hydrolysis rate. Plays a role in control of the cell cycle, stress response, ribosome biogenesis and in those bacteria that undergo differentiation, in morphogenesis control.</text>
</comment>
<comment type="cofactor">
    <cofactor evidence="1">
        <name>Mg(2+)</name>
        <dbReference type="ChEBI" id="CHEBI:18420"/>
    </cofactor>
</comment>
<comment type="subunit">
    <text evidence="1">Monomer.</text>
</comment>
<comment type="subcellular location">
    <subcellularLocation>
        <location evidence="1">Cytoplasm</location>
    </subcellularLocation>
</comment>
<comment type="similarity">
    <text evidence="1">Belongs to the TRAFAC class OBG-HflX-like GTPase superfamily. OBG GTPase family.</text>
</comment>
<dbReference type="EC" id="3.6.5.-" evidence="1"/>
<dbReference type="EMBL" id="CP000251">
    <property type="protein sequence ID" value="ABC83944.1"/>
    <property type="molecule type" value="Genomic_DNA"/>
</dbReference>
<dbReference type="RefSeq" id="WP_011423226.1">
    <property type="nucleotide sequence ID" value="NC_007760.1"/>
</dbReference>
<dbReference type="SMR" id="Q2IH84"/>
<dbReference type="STRING" id="290397.Adeh_4180"/>
<dbReference type="KEGG" id="ade:Adeh_4180"/>
<dbReference type="eggNOG" id="COG0536">
    <property type="taxonomic scope" value="Bacteria"/>
</dbReference>
<dbReference type="HOGENOM" id="CLU_011747_2_0_7"/>
<dbReference type="OrthoDB" id="9807318at2"/>
<dbReference type="Proteomes" id="UP000001935">
    <property type="component" value="Chromosome"/>
</dbReference>
<dbReference type="GO" id="GO:0005737">
    <property type="term" value="C:cytoplasm"/>
    <property type="evidence" value="ECO:0007669"/>
    <property type="project" value="UniProtKB-SubCell"/>
</dbReference>
<dbReference type="GO" id="GO:0005525">
    <property type="term" value="F:GTP binding"/>
    <property type="evidence" value="ECO:0007669"/>
    <property type="project" value="UniProtKB-UniRule"/>
</dbReference>
<dbReference type="GO" id="GO:0003924">
    <property type="term" value="F:GTPase activity"/>
    <property type="evidence" value="ECO:0007669"/>
    <property type="project" value="UniProtKB-UniRule"/>
</dbReference>
<dbReference type="GO" id="GO:0000287">
    <property type="term" value="F:magnesium ion binding"/>
    <property type="evidence" value="ECO:0007669"/>
    <property type="project" value="InterPro"/>
</dbReference>
<dbReference type="GO" id="GO:0042254">
    <property type="term" value="P:ribosome biogenesis"/>
    <property type="evidence" value="ECO:0007669"/>
    <property type="project" value="UniProtKB-UniRule"/>
</dbReference>
<dbReference type="CDD" id="cd01898">
    <property type="entry name" value="Obg"/>
    <property type="match status" value="1"/>
</dbReference>
<dbReference type="FunFam" id="2.70.210.12:FF:000001">
    <property type="entry name" value="GTPase Obg"/>
    <property type="match status" value="1"/>
</dbReference>
<dbReference type="Gene3D" id="2.70.210.12">
    <property type="entry name" value="GTP1/OBG domain"/>
    <property type="match status" value="1"/>
</dbReference>
<dbReference type="Gene3D" id="3.40.50.300">
    <property type="entry name" value="P-loop containing nucleotide triphosphate hydrolases"/>
    <property type="match status" value="1"/>
</dbReference>
<dbReference type="HAMAP" id="MF_01454">
    <property type="entry name" value="GTPase_Obg"/>
    <property type="match status" value="1"/>
</dbReference>
<dbReference type="InterPro" id="IPR031167">
    <property type="entry name" value="G_OBG"/>
</dbReference>
<dbReference type="InterPro" id="IPR006073">
    <property type="entry name" value="GTP-bd"/>
</dbReference>
<dbReference type="InterPro" id="IPR014100">
    <property type="entry name" value="GTP-bd_Obg/CgtA"/>
</dbReference>
<dbReference type="InterPro" id="IPR006074">
    <property type="entry name" value="GTP1-OBG_CS"/>
</dbReference>
<dbReference type="InterPro" id="IPR006169">
    <property type="entry name" value="GTP1_OBG_dom"/>
</dbReference>
<dbReference type="InterPro" id="IPR036726">
    <property type="entry name" value="GTP1_OBG_dom_sf"/>
</dbReference>
<dbReference type="InterPro" id="IPR045086">
    <property type="entry name" value="OBG_GTPase"/>
</dbReference>
<dbReference type="InterPro" id="IPR027417">
    <property type="entry name" value="P-loop_NTPase"/>
</dbReference>
<dbReference type="NCBIfam" id="TIGR02729">
    <property type="entry name" value="Obg_CgtA"/>
    <property type="match status" value="1"/>
</dbReference>
<dbReference type="NCBIfam" id="NF008954">
    <property type="entry name" value="PRK12296.1"/>
    <property type="match status" value="1"/>
</dbReference>
<dbReference type="NCBIfam" id="NF008955">
    <property type="entry name" value="PRK12297.1"/>
    <property type="match status" value="1"/>
</dbReference>
<dbReference type="NCBIfam" id="NF008956">
    <property type="entry name" value="PRK12299.1"/>
    <property type="match status" value="1"/>
</dbReference>
<dbReference type="PANTHER" id="PTHR11702">
    <property type="entry name" value="DEVELOPMENTALLY REGULATED GTP-BINDING PROTEIN-RELATED"/>
    <property type="match status" value="1"/>
</dbReference>
<dbReference type="PANTHER" id="PTHR11702:SF31">
    <property type="entry name" value="MITOCHONDRIAL RIBOSOME-ASSOCIATED GTPASE 2"/>
    <property type="match status" value="1"/>
</dbReference>
<dbReference type="Pfam" id="PF01018">
    <property type="entry name" value="GTP1_OBG"/>
    <property type="match status" value="1"/>
</dbReference>
<dbReference type="Pfam" id="PF01926">
    <property type="entry name" value="MMR_HSR1"/>
    <property type="match status" value="1"/>
</dbReference>
<dbReference type="PIRSF" id="PIRSF002401">
    <property type="entry name" value="GTP_bd_Obg/CgtA"/>
    <property type="match status" value="1"/>
</dbReference>
<dbReference type="PRINTS" id="PR00326">
    <property type="entry name" value="GTP1OBG"/>
</dbReference>
<dbReference type="SUPFAM" id="SSF82051">
    <property type="entry name" value="Obg GTP-binding protein N-terminal domain"/>
    <property type="match status" value="1"/>
</dbReference>
<dbReference type="SUPFAM" id="SSF52540">
    <property type="entry name" value="P-loop containing nucleoside triphosphate hydrolases"/>
    <property type="match status" value="1"/>
</dbReference>
<dbReference type="PROSITE" id="PS51710">
    <property type="entry name" value="G_OBG"/>
    <property type="match status" value="1"/>
</dbReference>
<dbReference type="PROSITE" id="PS00905">
    <property type="entry name" value="GTP1_OBG"/>
    <property type="match status" value="1"/>
</dbReference>
<dbReference type="PROSITE" id="PS51883">
    <property type="entry name" value="OBG"/>
    <property type="match status" value="1"/>
</dbReference>
<sequence length="354" mass="37281">MKFVDEVKIHVKAGDGGDGAVAWRREKFIPRGGPAGGDGGNGGDVVLEVDPQLSTLLDYRYIREHKARNGEKGSGSDMNGKDGADLVLRVPPGTVVKDAATGEQLCDLGTAGERVVIAKGGRGGLGNMNFASSTNQAPRYAEDGTPGAERDLVLELKLLADVGIVGYPNAGKSTLISRISRARPKIADYPFTTLTPNLGVVGWRERSFVVADIPGLIEGAHAGAGLGHQFLRHVERCRVLIHLVEGANPEPGRAPKADLDAINAELAAYSDELAKKPQIVAVTKIDVPEARAAGVKLQKLLGRRKKPVPVHLVSAVTGEGLDALLDAVGRALFKEARPHRGGGGKKLAKPRARA</sequence>
<protein>
    <recommendedName>
        <fullName evidence="1">GTPase Obg</fullName>
        <ecNumber evidence="1">3.6.5.-</ecNumber>
    </recommendedName>
    <alternativeName>
        <fullName evidence="1">GTP-binding protein Obg</fullName>
    </alternativeName>
</protein>
<name>OBG_ANADE</name>
<accession>Q2IH84</accession>
<organism>
    <name type="scientific">Anaeromyxobacter dehalogenans (strain 2CP-C)</name>
    <dbReference type="NCBI Taxonomy" id="290397"/>
    <lineage>
        <taxon>Bacteria</taxon>
        <taxon>Pseudomonadati</taxon>
        <taxon>Myxococcota</taxon>
        <taxon>Myxococcia</taxon>
        <taxon>Myxococcales</taxon>
        <taxon>Cystobacterineae</taxon>
        <taxon>Anaeromyxobacteraceae</taxon>
        <taxon>Anaeromyxobacter</taxon>
    </lineage>
</organism>
<keyword id="KW-0963">Cytoplasm</keyword>
<keyword id="KW-0342">GTP-binding</keyword>
<keyword id="KW-0378">Hydrolase</keyword>
<keyword id="KW-0460">Magnesium</keyword>
<keyword id="KW-0479">Metal-binding</keyword>
<keyword id="KW-0547">Nucleotide-binding</keyword>
<keyword id="KW-1185">Reference proteome</keyword>